<name>GATB_METS3</name>
<gene>
    <name evidence="1" type="primary">gatB</name>
    <name type="ordered locus">Msm_1101</name>
</gene>
<dbReference type="EC" id="6.3.5.-" evidence="1"/>
<dbReference type="EMBL" id="CP000678">
    <property type="protein sequence ID" value="ABQ87306.1"/>
    <property type="molecule type" value="Genomic_DNA"/>
</dbReference>
<dbReference type="RefSeq" id="WP_004032836.1">
    <property type="nucleotide sequence ID" value="NZ_CP117965.1"/>
</dbReference>
<dbReference type="SMR" id="A5UM78"/>
<dbReference type="STRING" id="420247.Msm_1101"/>
<dbReference type="EnsemblBacteria" id="ABQ87306">
    <property type="protein sequence ID" value="ABQ87306"/>
    <property type="gene ID" value="Msm_1101"/>
</dbReference>
<dbReference type="GeneID" id="78817746"/>
<dbReference type="KEGG" id="msi:Msm_1101"/>
<dbReference type="PATRIC" id="fig|420247.28.peg.1100"/>
<dbReference type="eggNOG" id="arCOG01718">
    <property type="taxonomic scope" value="Archaea"/>
</dbReference>
<dbReference type="HOGENOM" id="CLU_019240_0_1_2"/>
<dbReference type="Proteomes" id="UP000001992">
    <property type="component" value="Chromosome"/>
</dbReference>
<dbReference type="GO" id="GO:0050566">
    <property type="term" value="F:asparaginyl-tRNA synthase (glutamine-hydrolyzing) activity"/>
    <property type="evidence" value="ECO:0007669"/>
    <property type="project" value="RHEA"/>
</dbReference>
<dbReference type="GO" id="GO:0005524">
    <property type="term" value="F:ATP binding"/>
    <property type="evidence" value="ECO:0007669"/>
    <property type="project" value="UniProtKB-KW"/>
</dbReference>
<dbReference type="GO" id="GO:0050567">
    <property type="term" value="F:glutaminyl-tRNA synthase (glutamine-hydrolyzing) activity"/>
    <property type="evidence" value="ECO:0007669"/>
    <property type="project" value="UniProtKB-UniRule"/>
</dbReference>
<dbReference type="GO" id="GO:0070681">
    <property type="term" value="P:glutaminyl-tRNAGln biosynthesis via transamidation"/>
    <property type="evidence" value="ECO:0007669"/>
    <property type="project" value="TreeGrafter"/>
</dbReference>
<dbReference type="GO" id="GO:0006412">
    <property type="term" value="P:translation"/>
    <property type="evidence" value="ECO:0007669"/>
    <property type="project" value="UniProtKB-UniRule"/>
</dbReference>
<dbReference type="FunFam" id="1.10.10.410:FF:000001">
    <property type="entry name" value="Aspartyl/glutamyl-tRNA(Asn/Gln) amidotransferase subunit B"/>
    <property type="match status" value="1"/>
</dbReference>
<dbReference type="Gene3D" id="1.10.10.410">
    <property type="match status" value="1"/>
</dbReference>
<dbReference type="Gene3D" id="1.10.150.380">
    <property type="entry name" value="GatB domain, N-terminal subdomain"/>
    <property type="match status" value="1"/>
</dbReference>
<dbReference type="HAMAP" id="MF_00121">
    <property type="entry name" value="GatB"/>
    <property type="match status" value="1"/>
</dbReference>
<dbReference type="InterPro" id="IPR017959">
    <property type="entry name" value="Asn/Gln-tRNA_amidoTrfase_suB/E"/>
</dbReference>
<dbReference type="InterPro" id="IPR006075">
    <property type="entry name" value="Asn/Gln-tRNA_Trfase_suB/E_cat"/>
</dbReference>
<dbReference type="InterPro" id="IPR018027">
    <property type="entry name" value="Asn/Gln_amidotransferase"/>
</dbReference>
<dbReference type="InterPro" id="IPR003789">
    <property type="entry name" value="Asn/Gln_tRNA_amidoTrase-B-like"/>
</dbReference>
<dbReference type="InterPro" id="IPR004413">
    <property type="entry name" value="GatB"/>
</dbReference>
<dbReference type="InterPro" id="IPR042114">
    <property type="entry name" value="GatB_C_1"/>
</dbReference>
<dbReference type="InterPro" id="IPR023168">
    <property type="entry name" value="GatB_Yqey_C_2"/>
</dbReference>
<dbReference type="InterPro" id="IPR017958">
    <property type="entry name" value="Gln-tRNA_amidoTrfase_suB_CS"/>
</dbReference>
<dbReference type="InterPro" id="IPR014746">
    <property type="entry name" value="Gln_synth/guanido_kin_cat_dom"/>
</dbReference>
<dbReference type="NCBIfam" id="TIGR00133">
    <property type="entry name" value="gatB"/>
    <property type="match status" value="1"/>
</dbReference>
<dbReference type="NCBIfam" id="NF004012">
    <property type="entry name" value="PRK05477.1-2"/>
    <property type="match status" value="1"/>
</dbReference>
<dbReference type="PANTHER" id="PTHR11659">
    <property type="entry name" value="GLUTAMYL-TRNA GLN AMIDOTRANSFERASE SUBUNIT B MITOCHONDRIAL AND PROKARYOTIC PET112-RELATED"/>
    <property type="match status" value="1"/>
</dbReference>
<dbReference type="PANTHER" id="PTHR11659:SF0">
    <property type="entry name" value="GLUTAMYL-TRNA(GLN) AMIDOTRANSFERASE SUBUNIT B, MITOCHONDRIAL"/>
    <property type="match status" value="1"/>
</dbReference>
<dbReference type="Pfam" id="PF02934">
    <property type="entry name" value="GatB_N"/>
    <property type="match status" value="1"/>
</dbReference>
<dbReference type="Pfam" id="PF02637">
    <property type="entry name" value="GatB_Yqey"/>
    <property type="match status" value="1"/>
</dbReference>
<dbReference type="SMART" id="SM00845">
    <property type="entry name" value="GatB_Yqey"/>
    <property type="match status" value="1"/>
</dbReference>
<dbReference type="SUPFAM" id="SSF89095">
    <property type="entry name" value="GatB/YqeY motif"/>
    <property type="match status" value="1"/>
</dbReference>
<dbReference type="SUPFAM" id="SSF55931">
    <property type="entry name" value="Glutamine synthetase/guanido kinase"/>
    <property type="match status" value="1"/>
</dbReference>
<dbReference type="PROSITE" id="PS01234">
    <property type="entry name" value="GATB"/>
    <property type="match status" value="1"/>
</dbReference>
<feature type="chain" id="PRO_1000015997" description="Aspartyl/glutamyl-tRNA(Asn/Gln) amidotransferase subunit B">
    <location>
        <begin position="1"/>
        <end position="450"/>
    </location>
</feature>
<sequence>MMCGLEIHVQLETESKLFCDCPTNYKEAPANSNICPVCLNQPGAKPYPTNEKAIENALMISLMLNCKIDKGFTYFMRKHYDYPDLPSGYQRTSVPIGYEGELNGVRIREIHMEEDPGQYKPDRGTVDFNRSGIPLIEIVTEPDIKSPEEARTFLKELIRVLQYSGGARGEGTMRADVNISIEGGNRVEMKNINSIKGAYKALKFELVRQKNLMKRGVEIKQETRAYLESQMITVGMRLKEDADDYRFIPDPDLPPMEISDAQIENVLEIMPEAPHNKVRRFTEEYGIDAESAKVLTSELDLAIAYEAVAKQVDPKFASMWMRDELKRVLSYNKLDFADSGILVEDIVELLEMLQNKEITTKAGQRIIEHMPNNKQTPKAIAEELGLLGVVKDDEVIAAVKQAIEENPKAVNDYLEGQKSSLNFLVGQVMRLTRGKADPGETVKILKENIE</sequence>
<protein>
    <recommendedName>
        <fullName evidence="1">Aspartyl/glutamyl-tRNA(Asn/Gln) amidotransferase subunit B</fullName>
        <shortName evidence="1">Asp/Glu-ADT subunit B</shortName>
        <ecNumber evidence="1">6.3.5.-</ecNumber>
    </recommendedName>
</protein>
<reference key="1">
    <citation type="journal article" date="2007" name="Proc. Natl. Acad. Sci. U.S.A.">
        <title>Genomic and metabolic adaptations of Methanobrevibacter smithii to the human gut.</title>
        <authorList>
            <person name="Samuel B.S."/>
            <person name="Hansen E.E."/>
            <person name="Manchester J.K."/>
            <person name="Coutinho P.M."/>
            <person name="Henrissat B."/>
            <person name="Fulton R."/>
            <person name="Latreille P."/>
            <person name="Kim K."/>
            <person name="Wilson R.K."/>
            <person name="Gordon J.I."/>
        </authorList>
    </citation>
    <scope>NUCLEOTIDE SEQUENCE [LARGE SCALE GENOMIC DNA]</scope>
    <source>
        <strain>ATCC 35061 / DSM 861 / OCM 144 / PS</strain>
    </source>
</reference>
<organism>
    <name type="scientific">Methanobrevibacter smithii (strain ATCC 35061 / DSM 861 / OCM 144 / PS)</name>
    <dbReference type="NCBI Taxonomy" id="420247"/>
    <lineage>
        <taxon>Archaea</taxon>
        <taxon>Methanobacteriati</taxon>
        <taxon>Methanobacteriota</taxon>
        <taxon>Methanomada group</taxon>
        <taxon>Methanobacteria</taxon>
        <taxon>Methanobacteriales</taxon>
        <taxon>Methanobacteriaceae</taxon>
        <taxon>Methanobrevibacter</taxon>
    </lineage>
</organism>
<comment type="function">
    <text evidence="1">Allows the formation of correctly charged Asn-tRNA(Asn) or Gln-tRNA(Gln) through the transamidation of misacylated Asp-tRNA(Asn) or Glu-tRNA(Gln) in organisms which lack either or both of asparaginyl-tRNA or glutaminyl-tRNA synthetases. The reaction takes place in the presence of glutamine and ATP through an activated phospho-Asp-tRNA(Asn) or phospho-Glu-tRNA(Gln).</text>
</comment>
<comment type="catalytic activity">
    <reaction evidence="1">
        <text>L-glutamyl-tRNA(Gln) + L-glutamine + ATP + H2O = L-glutaminyl-tRNA(Gln) + L-glutamate + ADP + phosphate + H(+)</text>
        <dbReference type="Rhea" id="RHEA:17521"/>
        <dbReference type="Rhea" id="RHEA-COMP:9681"/>
        <dbReference type="Rhea" id="RHEA-COMP:9684"/>
        <dbReference type="ChEBI" id="CHEBI:15377"/>
        <dbReference type="ChEBI" id="CHEBI:15378"/>
        <dbReference type="ChEBI" id="CHEBI:29985"/>
        <dbReference type="ChEBI" id="CHEBI:30616"/>
        <dbReference type="ChEBI" id="CHEBI:43474"/>
        <dbReference type="ChEBI" id="CHEBI:58359"/>
        <dbReference type="ChEBI" id="CHEBI:78520"/>
        <dbReference type="ChEBI" id="CHEBI:78521"/>
        <dbReference type="ChEBI" id="CHEBI:456216"/>
    </reaction>
</comment>
<comment type="catalytic activity">
    <reaction evidence="1">
        <text>L-aspartyl-tRNA(Asn) + L-glutamine + ATP + H2O = L-asparaginyl-tRNA(Asn) + L-glutamate + ADP + phosphate + 2 H(+)</text>
        <dbReference type="Rhea" id="RHEA:14513"/>
        <dbReference type="Rhea" id="RHEA-COMP:9674"/>
        <dbReference type="Rhea" id="RHEA-COMP:9677"/>
        <dbReference type="ChEBI" id="CHEBI:15377"/>
        <dbReference type="ChEBI" id="CHEBI:15378"/>
        <dbReference type="ChEBI" id="CHEBI:29985"/>
        <dbReference type="ChEBI" id="CHEBI:30616"/>
        <dbReference type="ChEBI" id="CHEBI:43474"/>
        <dbReference type="ChEBI" id="CHEBI:58359"/>
        <dbReference type="ChEBI" id="CHEBI:78515"/>
        <dbReference type="ChEBI" id="CHEBI:78516"/>
        <dbReference type="ChEBI" id="CHEBI:456216"/>
    </reaction>
</comment>
<comment type="subunit">
    <text evidence="1">Heterotrimer of A, B and C subunits.</text>
</comment>
<comment type="similarity">
    <text evidence="1">Belongs to the GatB/GatE family. GatB subfamily.</text>
</comment>
<evidence type="ECO:0000255" key="1">
    <source>
        <dbReference type="HAMAP-Rule" id="MF_00121"/>
    </source>
</evidence>
<accession>A5UM78</accession>
<proteinExistence type="inferred from homology"/>
<keyword id="KW-0067">ATP-binding</keyword>
<keyword id="KW-0436">Ligase</keyword>
<keyword id="KW-0547">Nucleotide-binding</keyword>
<keyword id="KW-0648">Protein biosynthesis</keyword>